<accession>A3MR88</accession>
<keyword id="KW-0687">Ribonucleoprotein</keyword>
<keyword id="KW-0689">Ribosomal protein</keyword>
<keyword id="KW-0694">RNA-binding</keyword>
<keyword id="KW-0699">rRNA-binding</keyword>
<protein>
    <recommendedName>
        <fullName evidence="1">Large ribosomal subunit protein bL21</fullName>
    </recommendedName>
    <alternativeName>
        <fullName evidence="2">50S ribosomal protein L21</fullName>
    </alternativeName>
</protein>
<reference key="1">
    <citation type="journal article" date="2010" name="Genome Biol. Evol.">
        <title>Continuing evolution of Burkholderia mallei through genome reduction and large-scale rearrangements.</title>
        <authorList>
            <person name="Losada L."/>
            <person name="Ronning C.M."/>
            <person name="DeShazer D."/>
            <person name="Woods D."/>
            <person name="Fedorova N."/>
            <person name="Kim H.S."/>
            <person name="Shabalina S.A."/>
            <person name="Pearson T.R."/>
            <person name="Brinkac L."/>
            <person name="Tan P."/>
            <person name="Nandi T."/>
            <person name="Crabtree J."/>
            <person name="Badger J."/>
            <person name="Beckstrom-Sternberg S."/>
            <person name="Saqib M."/>
            <person name="Schutzer S.E."/>
            <person name="Keim P."/>
            <person name="Nierman W.C."/>
        </authorList>
    </citation>
    <scope>NUCLEOTIDE SEQUENCE [LARGE SCALE GENOMIC DNA]</scope>
    <source>
        <strain>NCTC 10247</strain>
    </source>
</reference>
<dbReference type="EMBL" id="CP000548">
    <property type="protein sequence ID" value="ABO07113.1"/>
    <property type="molecule type" value="Genomic_DNA"/>
</dbReference>
<dbReference type="RefSeq" id="WP_004194344.1">
    <property type="nucleotide sequence ID" value="NZ_CP007802.1"/>
</dbReference>
<dbReference type="SMR" id="A3MR88"/>
<dbReference type="GeneID" id="93061605"/>
<dbReference type="KEGG" id="bmaz:BM44_110"/>
<dbReference type="KEGG" id="bmn:BMA10247_3258"/>
<dbReference type="PATRIC" id="fig|320389.8.peg.118"/>
<dbReference type="GO" id="GO:0005737">
    <property type="term" value="C:cytoplasm"/>
    <property type="evidence" value="ECO:0007669"/>
    <property type="project" value="UniProtKB-ARBA"/>
</dbReference>
<dbReference type="GO" id="GO:1990904">
    <property type="term" value="C:ribonucleoprotein complex"/>
    <property type="evidence" value="ECO:0007669"/>
    <property type="project" value="UniProtKB-KW"/>
</dbReference>
<dbReference type="GO" id="GO:0005840">
    <property type="term" value="C:ribosome"/>
    <property type="evidence" value="ECO:0007669"/>
    <property type="project" value="UniProtKB-KW"/>
</dbReference>
<dbReference type="GO" id="GO:0019843">
    <property type="term" value="F:rRNA binding"/>
    <property type="evidence" value="ECO:0007669"/>
    <property type="project" value="UniProtKB-UniRule"/>
</dbReference>
<dbReference type="GO" id="GO:0003735">
    <property type="term" value="F:structural constituent of ribosome"/>
    <property type="evidence" value="ECO:0007669"/>
    <property type="project" value="InterPro"/>
</dbReference>
<dbReference type="GO" id="GO:0006412">
    <property type="term" value="P:translation"/>
    <property type="evidence" value="ECO:0007669"/>
    <property type="project" value="UniProtKB-UniRule"/>
</dbReference>
<dbReference type="HAMAP" id="MF_01363">
    <property type="entry name" value="Ribosomal_bL21"/>
    <property type="match status" value="1"/>
</dbReference>
<dbReference type="InterPro" id="IPR028909">
    <property type="entry name" value="bL21-like"/>
</dbReference>
<dbReference type="InterPro" id="IPR036164">
    <property type="entry name" value="bL21-like_sf"/>
</dbReference>
<dbReference type="InterPro" id="IPR001787">
    <property type="entry name" value="Ribosomal_bL21"/>
</dbReference>
<dbReference type="InterPro" id="IPR018258">
    <property type="entry name" value="Ribosomal_bL21_CS"/>
</dbReference>
<dbReference type="NCBIfam" id="TIGR00061">
    <property type="entry name" value="L21"/>
    <property type="match status" value="1"/>
</dbReference>
<dbReference type="PANTHER" id="PTHR21349">
    <property type="entry name" value="50S RIBOSOMAL PROTEIN L21"/>
    <property type="match status" value="1"/>
</dbReference>
<dbReference type="PANTHER" id="PTHR21349:SF0">
    <property type="entry name" value="LARGE RIBOSOMAL SUBUNIT PROTEIN BL21M"/>
    <property type="match status" value="1"/>
</dbReference>
<dbReference type="Pfam" id="PF00829">
    <property type="entry name" value="Ribosomal_L21p"/>
    <property type="match status" value="1"/>
</dbReference>
<dbReference type="SUPFAM" id="SSF141091">
    <property type="entry name" value="L21p-like"/>
    <property type="match status" value="1"/>
</dbReference>
<dbReference type="PROSITE" id="PS01169">
    <property type="entry name" value="RIBOSOMAL_L21"/>
    <property type="match status" value="1"/>
</dbReference>
<organism>
    <name type="scientific">Burkholderia mallei (strain NCTC 10247)</name>
    <dbReference type="NCBI Taxonomy" id="320389"/>
    <lineage>
        <taxon>Bacteria</taxon>
        <taxon>Pseudomonadati</taxon>
        <taxon>Pseudomonadota</taxon>
        <taxon>Betaproteobacteria</taxon>
        <taxon>Burkholderiales</taxon>
        <taxon>Burkholderiaceae</taxon>
        <taxon>Burkholderia</taxon>
        <taxon>pseudomallei group</taxon>
    </lineage>
</organism>
<gene>
    <name evidence="1" type="primary">rplU</name>
    <name type="ordered locus">BMA10247_3258</name>
</gene>
<feature type="chain" id="PRO_1000067811" description="Large ribosomal subunit protein bL21">
    <location>
        <begin position="1"/>
        <end position="103"/>
    </location>
</feature>
<sequence length="103" mass="11356">MYAVIKTGGKQYKVAVGEKLKVEQIPADIDAEITLDQVLAVGEGESIQFGTPLVSGASVKATVVSHGRHAKVTIFKMRRRKHYQKHGGHRQNYTELRIDAINA</sequence>
<name>RL21_BURM7</name>
<comment type="function">
    <text evidence="1">This protein binds to 23S rRNA in the presence of protein L20.</text>
</comment>
<comment type="subunit">
    <text evidence="1">Part of the 50S ribosomal subunit. Contacts protein L20.</text>
</comment>
<comment type="similarity">
    <text evidence="1">Belongs to the bacterial ribosomal protein bL21 family.</text>
</comment>
<evidence type="ECO:0000255" key="1">
    <source>
        <dbReference type="HAMAP-Rule" id="MF_01363"/>
    </source>
</evidence>
<evidence type="ECO:0000305" key="2"/>
<proteinExistence type="inferred from homology"/>